<reference key="1">
    <citation type="submission" date="2005-08" db="EMBL/GenBank/DDBJ databases">
        <title>Complete sequence of Pelodictyon luteolum DSM 273.</title>
        <authorList>
            <consortium name="US DOE Joint Genome Institute"/>
            <person name="Copeland A."/>
            <person name="Lucas S."/>
            <person name="Lapidus A."/>
            <person name="Barry K."/>
            <person name="Detter J.C."/>
            <person name="Glavina T."/>
            <person name="Hammon N."/>
            <person name="Israni S."/>
            <person name="Pitluck S."/>
            <person name="Bryant D."/>
            <person name="Schmutz J."/>
            <person name="Larimer F."/>
            <person name="Land M."/>
            <person name="Kyrpides N."/>
            <person name="Ivanova N."/>
            <person name="Richardson P."/>
        </authorList>
    </citation>
    <scope>NUCLEOTIDE SEQUENCE [LARGE SCALE GENOMIC DNA]</scope>
    <source>
        <strain>DSM 273 / BCRC 81028 / 2530</strain>
    </source>
</reference>
<protein>
    <recommendedName>
        <fullName evidence="1">Biotin synthase</fullName>
        <ecNumber evidence="1">2.8.1.6</ecNumber>
    </recommendedName>
</protein>
<organism>
    <name type="scientific">Chlorobium luteolum (strain DSM 273 / BCRC 81028 / 2530)</name>
    <name type="common">Pelodictyon luteolum</name>
    <dbReference type="NCBI Taxonomy" id="319225"/>
    <lineage>
        <taxon>Bacteria</taxon>
        <taxon>Pseudomonadati</taxon>
        <taxon>Chlorobiota</taxon>
        <taxon>Chlorobiia</taxon>
        <taxon>Chlorobiales</taxon>
        <taxon>Chlorobiaceae</taxon>
        <taxon>Chlorobium/Pelodictyon group</taxon>
        <taxon>Pelodictyon</taxon>
    </lineage>
</organism>
<proteinExistence type="inferred from homology"/>
<accession>Q3B169</accession>
<evidence type="ECO:0000255" key="1">
    <source>
        <dbReference type="HAMAP-Rule" id="MF_01694"/>
    </source>
</evidence>
<evidence type="ECO:0000255" key="2">
    <source>
        <dbReference type="PROSITE-ProRule" id="PRU01266"/>
    </source>
</evidence>
<evidence type="ECO:0000305" key="3"/>
<sequence length="332" mass="35921">MGVPPLHPEISAAYSVLETGEPIGREAALMLAALPGEHALDIASLANKVRNRWGKGGVHACSIMNAKSGVCGENCRFCAQSRHNHSDIEVYPLVDEDAVLFEARGCVEQGVSHFGIVTSGYGYLKMSDEFQRILSMIDRLHSELPSLQVCASLGVLGPDTAKALAGRGIAHYNINIQVTPGRYGELIADTHAVEERMETVRLLRRNGVSVCCGGIIGVGEHMEDRVEMMFALRELDVSVIPINVLVPIKGTPLEGAPSLPLDEIVKTFAIMRLVHPRKTIKFAAGRETVMKDFQGLLMLSGADGLLTGGYLTTRGREVADDTRFRAQLASFS</sequence>
<feature type="chain" id="PRO_0000381520" description="Biotin synthase">
    <location>
        <begin position="1"/>
        <end position="332"/>
    </location>
</feature>
<feature type="domain" description="Radical SAM core" evidence="2">
    <location>
        <begin position="53"/>
        <end position="283"/>
    </location>
</feature>
<feature type="binding site" evidence="1">
    <location>
        <position position="71"/>
    </location>
    <ligand>
        <name>[4Fe-4S] cluster</name>
        <dbReference type="ChEBI" id="CHEBI:49883"/>
        <note>4Fe-4S-S-AdoMet</note>
    </ligand>
</feature>
<feature type="binding site" evidence="1">
    <location>
        <position position="75"/>
    </location>
    <ligand>
        <name>[4Fe-4S] cluster</name>
        <dbReference type="ChEBI" id="CHEBI:49883"/>
        <note>4Fe-4S-S-AdoMet</note>
    </ligand>
</feature>
<feature type="binding site" evidence="1">
    <location>
        <position position="78"/>
    </location>
    <ligand>
        <name>[4Fe-4S] cluster</name>
        <dbReference type="ChEBI" id="CHEBI:49883"/>
        <note>4Fe-4S-S-AdoMet</note>
    </ligand>
</feature>
<feature type="binding site" evidence="1">
    <location>
        <position position="150"/>
    </location>
    <ligand>
        <name>[2Fe-2S] cluster</name>
        <dbReference type="ChEBI" id="CHEBI:190135"/>
    </ligand>
</feature>
<feature type="binding site" evidence="1">
    <location>
        <position position="211"/>
    </location>
    <ligand>
        <name>[2Fe-2S] cluster</name>
        <dbReference type="ChEBI" id="CHEBI:190135"/>
    </ligand>
</feature>
<feature type="binding site" evidence="1">
    <location>
        <position position="281"/>
    </location>
    <ligand>
        <name>[2Fe-2S] cluster</name>
        <dbReference type="ChEBI" id="CHEBI:190135"/>
    </ligand>
</feature>
<dbReference type="EC" id="2.8.1.6" evidence="1"/>
<dbReference type="EMBL" id="CP000096">
    <property type="protein sequence ID" value="ABB24912.1"/>
    <property type="status" value="ALT_INIT"/>
    <property type="molecule type" value="Genomic_DNA"/>
</dbReference>
<dbReference type="SMR" id="Q3B169"/>
<dbReference type="STRING" id="319225.Plut_2070"/>
<dbReference type="KEGG" id="plt:Plut_2070"/>
<dbReference type="eggNOG" id="COG0502">
    <property type="taxonomic scope" value="Bacteria"/>
</dbReference>
<dbReference type="HOGENOM" id="CLU_033172_2_1_10"/>
<dbReference type="OrthoDB" id="9786826at2"/>
<dbReference type="UniPathway" id="UPA00078">
    <property type="reaction ID" value="UER00162"/>
</dbReference>
<dbReference type="Proteomes" id="UP000002709">
    <property type="component" value="Chromosome"/>
</dbReference>
<dbReference type="GO" id="GO:0051537">
    <property type="term" value="F:2 iron, 2 sulfur cluster binding"/>
    <property type="evidence" value="ECO:0007669"/>
    <property type="project" value="UniProtKB-KW"/>
</dbReference>
<dbReference type="GO" id="GO:0051539">
    <property type="term" value="F:4 iron, 4 sulfur cluster binding"/>
    <property type="evidence" value="ECO:0007669"/>
    <property type="project" value="UniProtKB-KW"/>
</dbReference>
<dbReference type="GO" id="GO:0004076">
    <property type="term" value="F:biotin synthase activity"/>
    <property type="evidence" value="ECO:0007669"/>
    <property type="project" value="UniProtKB-UniRule"/>
</dbReference>
<dbReference type="GO" id="GO:0005506">
    <property type="term" value="F:iron ion binding"/>
    <property type="evidence" value="ECO:0007669"/>
    <property type="project" value="UniProtKB-UniRule"/>
</dbReference>
<dbReference type="GO" id="GO:0009102">
    <property type="term" value="P:biotin biosynthetic process"/>
    <property type="evidence" value="ECO:0007669"/>
    <property type="project" value="UniProtKB-UniRule"/>
</dbReference>
<dbReference type="CDD" id="cd01335">
    <property type="entry name" value="Radical_SAM"/>
    <property type="match status" value="1"/>
</dbReference>
<dbReference type="Gene3D" id="3.20.20.70">
    <property type="entry name" value="Aldolase class I"/>
    <property type="match status" value="1"/>
</dbReference>
<dbReference type="HAMAP" id="MF_01694">
    <property type="entry name" value="BioB"/>
    <property type="match status" value="1"/>
</dbReference>
<dbReference type="InterPro" id="IPR013785">
    <property type="entry name" value="Aldolase_TIM"/>
</dbReference>
<dbReference type="InterPro" id="IPR010722">
    <property type="entry name" value="BATS_dom"/>
</dbReference>
<dbReference type="InterPro" id="IPR002684">
    <property type="entry name" value="Biotin_synth/BioAB"/>
</dbReference>
<dbReference type="InterPro" id="IPR024177">
    <property type="entry name" value="Biotin_synthase"/>
</dbReference>
<dbReference type="InterPro" id="IPR006638">
    <property type="entry name" value="Elp3/MiaA/NifB-like_rSAM"/>
</dbReference>
<dbReference type="InterPro" id="IPR007197">
    <property type="entry name" value="rSAM"/>
</dbReference>
<dbReference type="NCBIfam" id="TIGR00433">
    <property type="entry name" value="bioB"/>
    <property type="match status" value="1"/>
</dbReference>
<dbReference type="PANTHER" id="PTHR22976">
    <property type="entry name" value="BIOTIN SYNTHASE"/>
    <property type="match status" value="1"/>
</dbReference>
<dbReference type="PANTHER" id="PTHR22976:SF2">
    <property type="entry name" value="BIOTIN SYNTHASE, MITOCHONDRIAL"/>
    <property type="match status" value="1"/>
</dbReference>
<dbReference type="Pfam" id="PF06968">
    <property type="entry name" value="BATS"/>
    <property type="match status" value="1"/>
</dbReference>
<dbReference type="Pfam" id="PF04055">
    <property type="entry name" value="Radical_SAM"/>
    <property type="match status" value="1"/>
</dbReference>
<dbReference type="PIRSF" id="PIRSF001619">
    <property type="entry name" value="Biotin_synth"/>
    <property type="match status" value="1"/>
</dbReference>
<dbReference type="SFLD" id="SFLDG01278">
    <property type="entry name" value="biotin_synthase_like"/>
    <property type="match status" value="1"/>
</dbReference>
<dbReference type="SFLD" id="SFLDS00029">
    <property type="entry name" value="Radical_SAM"/>
    <property type="match status" value="1"/>
</dbReference>
<dbReference type="SMART" id="SM00876">
    <property type="entry name" value="BATS"/>
    <property type="match status" value="1"/>
</dbReference>
<dbReference type="SMART" id="SM00729">
    <property type="entry name" value="Elp3"/>
    <property type="match status" value="1"/>
</dbReference>
<dbReference type="SUPFAM" id="SSF102114">
    <property type="entry name" value="Radical SAM enzymes"/>
    <property type="match status" value="1"/>
</dbReference>
<dbReference type="PROSITE" id="PS51918">
    <property type="entry name" value="RADICAL_SAM"/>
    <property type="match status" value="1"/>
</dbReference>
<comment type="function">
    <text evidence="1">Catalyzes the conversion of dethiobiotin (DTB) to biotin by the insertion of a sulfur atom into dethiobiotin via a radical-based mechanism.</text>
</comment>
<comment type="catalytic activity">
    <reaction evidence="1">
        <text>(4R,5S)-dethiobiotin + (sulfur carrier)-SH + 2 reduced [2Fe-2S]-[ferredoxin] + 2 S-adenosyl-L-methionine = (sulfur carrier)-H + biotin + 2 5'-deoxyadenosine + 2 L-methionine + 2 oxidized [2Fe-2S]-[ferredoxin]</text>
        <dbReference type="Rhea" id="RHEA:22060"/>
        <dbReference type="Rhea" id="RHEA-COMP:10000"/>
        <dbReference type="Rhea" id="RHEA-COMP:10001"/>
        <dbReference type="Rhea" id="RHEA-COMP:14737"/>
        <dbReference type="Rhea" id="RHEA-COMP:14739"/>
        <dbReference type="ChEBI" id="CHEBI:17319"/>
        <dbReference type="ChEBI" id="CHEBI:29917"/>
        <dbReference type="ChEBI" id="CHEBI:33737"/>
        <dbReference type="ChEBI" id="CHEBI:33738"/>
        <dbReference type="ChEBI" id="CHEBI:57586"/>
        <dbReference type="ChEBI" id="CHEBI:57844"/>
        <dbReference type="ChEBI" id="CHEBI:59789"/>
        <dbReference type="ChEBI" id="CHEBI:64428"/>
        <dbReference type="ChEBI" id="CHEBI:149473"/>
        <dbReference type="EC" id="2.8.1.6"/>
    </reaction>
</comment>
<comment type="cofactor">
    <cofactor evidence="1">
        <name>[4Fe-4S] cluster</name>
        <dbReference type="ChEBI" id="CHEBI:49883"/>
    </cofactor>
    <text evidence="1">Binds 1 [4Fe-4S] cluster. The cluster is coordinated with 3 cysteines and an exchangeable S-adenosyl-L-methionine.</text>
</comment>
<comment type="cofactor">
    <cofactor evidence="1">
        <name>[2Fe-2S] cluster</name>
        <dbReference type="ChEBI" id="CHEBI:190135"/>
    </cofactor>
    <text evidence="1">Binds 1 [2Fe-2S] cluster. The cluster is coordinated with 3 cysteines and 1 arginine.</text>
</comment>
<comment type="pathway">
    <text evidence="1">Cofactor biosynthesis; biotin biosynthesis; biotin from 7,8-diaminononanoate: step 2/2.</text>
</comment>
<comment type="subunit">
    <text evidence="1">Homodimer.</text>
</comment>
<comment type="similarity">
    <text evidence="1">Belongs to the radical SAM superfamily. Biotin synthase family.</text>
</comment>
<comment type="sequence caution" evidence="3">
    <conflict type="erroneous initiation">
        <sequence resource="EMBL-CDS" id="ABB24912"/>
    </conflict>
</comment>
<name>BIOB_CHLL3</name>
<keyword id="KW-0001">2Fe-2S</keyword>
<keyword id="KW-0004">4Fe-4S</keyword>
<keyword id="KW-0093">Biotin biosynthesis</keyword>
<keyword id="KW-0408">Iron</keyword>
<keyword id="KW-0411">Iron-sulfur</keyword>
<keyword id="KW-0479">Metal-binding</keyword>
<keyword id="KW-1185">Reference proteome</keyword>
<keyword id="KW-0949">S-adenosyl-L-methionine</keyword>
<keyword id="KW-0808">Transferase</keyword>
<gene>
    <name evidence="1" type="primary">bioB</name>
    <name type="ordered locus">Plut_2070</name>
</gene>